<keyword id="KW-0963">Cytoplasm</keyword>
<keyword id="KW-0227">DNA damage</keyword>
<keyword id="KW-0233">DNA recombination</keyword>
<keyword id="KW-0234">DNA repair</keyword>
<keyword id="KW-0238">DNA-binding</keyword>
<protein>
    <recommendedName>
        <fullName evidence="1">Holliday junction branch migration complex subunit RuvA</fullName>
    </recommendedName>
</protein>
<comment type="function">
    <text evidence="1">The RuvA-RuvB-RuvC complex processes Holliday junction (HJ) DNA during genetic recombination and DNA repair, while the RuvA-RuvB complex plays an important role in the rescue of blocked DNA replication forks via replication fork reversal (RFR). RuvA specifically binds to HJ cruciform DNA, conferring on it an open structure. The RuvB hexamer acts as an ATP-dependent pump, pulling dsDNA into and through the RuvAB complex. HJ branch migration allows RuvC to scan DNA until it finds its consensus sequence, where it cleaves and resolves the cruciform DNA.</text>
</comment>
<comment type="subunit">
    <text evidence="1">Homotetramer. Forms an RuvA(8)-RuvB(12)-Holliday junction (HJ) complex. HJ DNA is sandwiched between 2 RuvA tetramers; dsDNA enters through RuvA and exits via RuvB. An RuvB hexamer assembles on each DNA strand where it exits the tetramer. Each RuvB hexamer is contacted by two RuvA subunits (via domain III) on 2 adjacent RuvB subunits; this complex drives branch migration. In the full resolvosome a probable DNA-RuvA(4)-RuvB(12)-RuvC(2) complex forms which resolves the HJ.</text>
</comment>
<comment type="subcellular location">
    <subcellularLocation>
        <location evidence="1">Cytoplasm</location>
    </subcellularLocation>
</comment>
<comment type="domain">
    <text evidence="1">Has three domains with a flexible linker between the domains II and III and assumes an 'L' shape. Domain III is highly mobile and contacts RuvB.</text>
</comment>
<comment type="similarity">
    <text evidence="1">Belongs to the RuvA family.</text>
</comment>
<name>RUVA_STRM5</name>
<feature type="chain" id="PRO_1000090373" description="Holliday junction branch migration complex subunit RuvA">
    <location>
        <begin position="1"/>
        <end position="197"/>
    </location>
</feature>
<feature type="region of interest" description="Domain I" evidence="1">
    <location>
        <begin position="1"/>
        <end position="64"/>
    </location>
</feature>
<feature type="region of interest" description="Domain II" evidence="1">
    <location>
        <begin position="65"/>
        <end position="143"/>
    </location>
</feature>
<feature type="region of interest" description="Flexible linker" evidence="1">
    <location>
        <begin position="144"/>
        <end position="153"/>
    </location>
</feature>
<feature type="region of interest" description="Domain III" evidence="1">
    <location>
        <begin position="153"/>
        <end position="197"/>
    </location>
</feature>
<evidence type="ECO:0000255" key="1">
    <source>
        <dbReference type="HAMAP-Rule" id="MF_00031"/>
    </source>
</evidence>
<organism>
    <name type="scientific">Stenotrophomonas maltophilia (strain R551-3)</name>
    <dbReference type="NCBI Taxonomy" id="391008"/>
    <lineage>
        <taxon>Bacteria</taxon>
        <taxon>Pseudomonadati</taxon>
        <taxon>Pseudomonadota</taxon>
        <taxon>Gammaproteobacteria</taxon>
        <taxon>Lysobacterales</taxon>
        <taxon>Lysobacteraceae</taxon>
        <taxon>Stenotrophomonas</taxon>
        <taxon>Stenotrophomonas maltophilia group</taxon>
    </lineage>
</organism>
<reference key="1">
    <citation type="submission" date="2008-06" db="EMBL/GenBank/DDBJ databases">
        <title>Complete sequence of Stenotrophomonas maltophilia R551-3.</title>
        <authorList>
            <consortium name="US DOE Joint Genome Institute"/>
            <person name="Lucas S."/>
            <person name="Copeland A."/>
            <person name="Lapidus A."/>
            <person name="Glavina del Rio T."/>
            <person name="Dalin E."/>
            <person name="Tice H."/>
            <person name="Pitluck S."/>
            <person name="Chain P."/>
            <person name="Malfatti S."/>
            <person name="Shin M."/>
            <person name="Vergez L."/>
            <person name="Lang D."/>
            <person name="Schmutz J."/>
            <person name="Larimer F."/>
            <person name="Land M."/>
            <person name="Hauser L."/>
            <person name="Kyrpides N."/>
            <person name="Mikhailova N."/>
            <person name="Taghavi S."/>
            <person name="Monchy S."/>
            <person name="Newman L."/>
            <person name="Vangronsveld J."/>
            <person name="van der Lelie D."/>
            <person name="Richardson P."/>
        </authorList>
    </citation>
    <scope>NUCLEOTIDE SEQUENCE [LARGE SCALE GENOMIC DNA]</scope>
    <source>
        <strain>R551-3</strain>
    </source>
</reference>
<accession>B4ST34</accession>
<sequence>MIGRLRGIVAYKAPPWLVVDVNGVGYELEAPMSTFYDLPELGREVTLYTHYSQKEDSVSLYGFLREGERRLFRDVQKVSGIGAKIALAVLSGVTVEEFARMVQAGDITALTRIPGIGKKTAERMVLELRDRAAQFGAGGALPTGSGPAPADPLSDATVALQQLGYKPAEAARMAREAFNEGDEVAIVIRKALQSALR</sequence>
<proteinExistence type="inferred from homology"/>
<gene>
    <name evidence="1" type="primary">ruvA</name>
    <name type="ordered locus">Smal_3126</name>
</gene>
<dbReference type="EMBL" id="CP001111">
    <property type="protein sequence ID" value="ACF52825.1"/>
    <property type="molecule type" value="Genomic_DNA"/>
</dbReference>
<dbReference type="RefSeq" id="WP_012511898.1">
    <property type="nucleotide sequence ID" value="NC_011071.1"/>
</dbReference>
<dbReference type="SMR" id="B4ST34"/>
<dbReference type="STRING" id="391008.Smal_3126"/>
<dbReference type="KEGG" id="smt:Smal_3126"/>
<dbReference type="eggNOG" id="COG0632">
    <property type="taxonomic scope" value="Bacteria"/>
</dbReference>
<dbReference type="HOGENOM" id="CLU_087936_0_0_6"/>
<dbReference type="OrthoDB" id="5293449at2"/>
<dbReference type="Proteomes" id="UP000001867">
    <property type="component" value="Chromosome"/>
</dbReference>
<dbReference type="GO" id="GO:0005737">
    <property type="term" value="C:cytoplasm"/>
    <property type="evidence" value="ECO:0007669"/>
    <property type="project" value="UniProtKB-SubCell"/>
</dbReference>
<dbReference type="GO" id="GO:0009379">
    <property type="term" value="C:Holliday junction helicase complex"/>
    <property type="evidence" value="ECO:0007669"/>
    <property type="project" value="InterPro"/>
</dbReference>
<dbReference type="GO" id="GO:0048476">
    <property type="term" value="C:Holliday junction resolvase complex"/>
    <property type="evidence" value="ECO:0007669"/>
    <property type="project" value="UniProtKB-UniRule"/>
</dbReference>
<dbReference type="GO" id="GO:0005524">
    <property type="term" value="F:ATP binding"/>
    <property type="evidence" value="ECO:0007669"/>
    <property type="project" value="InterPro"/>
</dbReference>
<dbReference type="GO" id="GO:0000400">
    <property type="term" value="F:four-way junction DNA binding"/>
    <property type="evidence" value="ECO:0007669"/>
    <property type="project" value="UniProtKB-UniRule"/>
</dbReference>
<dbReference type="GO" id="GO:0009378">
    <property type="term" value="F:four-way junction helicase activity"/>
    <property type="evidence" value="ECO:0007669"/>
    <property type="project" value="InterPro"/>
</dbReference>
<dbReference type="GO" id="GO:0006310">
    <property type="term" value="P:DNA recombination"/>
    <property type="evidence" value="ECO:0007669"/>
    <property type="project" value="UniProtKB-UniRule"/>
</dbReference>
<dbReference type="GO" id="GO:0006281">
    <property type="term" value="P:DNA repair"/>
    <property type="evidence" value="ECO:0007669"/>
    <property type="project" value="UniProtKB-UniRule"/>
</dbReference>
<dbReference type="Gene3D" id="1.10.150.20">
    <property type="entry name" value="5' to 3' exonuclease, C-terminal subdomain"/>
    <property type="match status" value="1"/>
</dbReference>
<dbReference type="Gene3D" id="1.10.8.10">
    <property type="entry name" value="DNA helicase RuvA subunit, C-terminal domain"/>
    <property type="match status" value="1"/>
</dbReference>
<dbReference type="Gene3D" id="2.40.50.140">
    <property type="entry name" value="Nucleic acid-binding proteins"/>
    <property type="match status" value="1"/>
</dbReference>
<dbReference type="HAMAP" id="MF_00031">
    <property type="entry name" value="DNA_HJ_migration_RuvA"/>
    <property type="match status" value="1"/>
</dbReference>
<dbReference type="InterPro" id="IPR013849">
    <property type="entry name" value="DNA_helicase_Holl-junc_RuvA_I"/>
</dbReference>
<dbReference type="InterPro" id="IPR003583">
    <property type="entry name" value="Hlx-hairpin-Hlx_DNA-bd_motif"/>
</dbReference>
<dbReference type="InterPro" id="IPR012340">
    <property type="entry name" value="NA-bd_OB-fold"/>
</dbReference>
<dbReference type="InterPro" id="IPR000085">
    <property type="entry name" value="RuvA"/>
</dbReference>
<dbReference type="InterPro" id="IPR010994">
    <property type="entry name" value="RuvA_2-like"/>
</dbReference>
<dbReference type="InterPro" id="IPR011114">
    <property type="entry name" value="RuvA_C"/>
</dbReference>
<dbReference type="InterPro" id="IPR036267">
    <property type="entry name" value="RuvA_C_sf"/>
</dbReference>
<dbReference type="NCBIfam" id="TIGR00084">
    <property type="entry name" value="ruvA"/>
    <property type="match status" value="1"/>
</dbReference>
<dbReference type="Pfam" id="PF14520">
    <property type="entry name" value="HHH_5"/>
    <property type="match status" value="1"/>
</dbReference>
<dbReference type="Pfam" id="PF07499">
    <property type="entry name" value="RuvA_C"/>
    <property type="match status" value="1"/>
</dbReference>
<dbReference type="Pfam" id="PF01330">
    <property type="entry name" value="RuvA_N"/>
    <property type="match status" value="1"/>
</dbReference>
<dbReference type="SMART" id="SM00278">
    <property type="entry name" value="HhH1"/>
    <property type="match status" value="2"/>
</dbReference>
<dbReference type="SUPFAM" id="SSF46929">
    <property type="entry name" value="DNA helicase RuvA subunit, C-terminal domain"/>
    <property type="match status" value="1"/>
</dbReference>
<dbReference type="SUPFAM" id="SSF50249">
    <property type="entry name" value="Nucleic acid-binding proteins"/>
    <property type="match status" value="1"/>
</dbReference>
<dbReference type="SUPFAM" id="SSF47781">
    <property type="entry name" value="RuvA domain 2-like"/>
    <property type="match status" value="1"/>
</dbReference>